<reference key="1">
    <citation type="submission" date="2007-03" db="EMBL/GenBank/DDBJ databases">
        <title>Complete sequence of chromosome 1 of Burkholderia vietnamiensis G4.</title>
        <authorList>
            <consortium name="US DOE Joint Genome Institute"/>
            <person name="Copeland A."/>
            <person name="Lucas S."/>
            <person name="Lapidus A."/>
            <person name="Barry K."/>
            <person name="Detter J.C."/>
            <person name="Glavina del Rio T."/>
            <person name="Hammon N."/>
            <person name="Israni S."/>
            <person name="Dalin E."/>
            <person name="Tice H."/>
            <person name="Pitluck S."/>
            <person name="Chain P."/>
            <person name="Malfatti S."/>
            <person name="Shin M."/>
            <person name="Vergez L."/>
            <person name="Schmutz J."/>
            <person name="Larimer F."/>
            <person name="Land M."/>
            <person name="Hauser L."/>
            <person name="Kyrpides N."/>
            <person name="Tiedje J."/>
            <person name="Richardson P."/>
        </authorList>
    </citation>
    <scope>NUCLEOTIDE SEQUENCE [LARGE SCALE GENOMIC DNA]</scope>
    <source>
        <strain>G4 / LMG 22486</strain>
    </source>
</reference>
<feature type="chain" id="PRO_1000069350" description="ADP-L-glycero-D-manno-heptose-6-epimerase">
    <location>
        <begin position="1"/>
        <end position="330"/>
    </location>
</feature>
<feature type="active site" description="Proton acceptor" evidence="1">
    <location>
        <position position="139"/>
    </location>
</feature>
<feature type="active site" description="Proton acceptor" evidence="1">
    <location>
        <position position="177"/>
    </location>
</feature>
<feature type="binding site" evidence="1">
    <location>
        <begin position="11"/>
        <end position="12"/>
    </location>
    <ligand>
        <name>NADP(+)</name>
        <dbReference type="ChEBI" id="CHEBI:58349"/>
    </ligand>
</feature>
<feature type="binding site" evidence="1">
    <location>
        <begin position="32"/>
        <end position="33"/>
    </location>
    <ligand>
        <name>NADP(+)</name>
        <dbReference type="ChEBI" id="CHEBI:58349"/>
    </ligand>
</feature>
<feature type="binding site" evidence="1">
    <location>
        <position position="39"/>
    </location>
    <ligand>
        <name>NADP(+)</name>
        <dbReference type="ChEBI" id="CHEBI:58349"/>
    </ligand>
</feature>
<feature type="binding site" evidence="1">
    <location>
        <position position="54"/>
    </location>
    <ligand>
        <name>NADP(+)</name>
        <dbReference type="ChEBI" id="CHEBI:58349"/>
    </ligand>
</feature>
<feature type="binding site" evidence="1">
    <location>
        <begin position="75"/>
        <end position="79"/>
    </location>
    <ligand>
        <name>NADP(+)</name>
        <dbReference type="ChEBI" id="CHEBI:58349"/>
    </ligand>
</feature>
<feature type="binding site" evidence="1">
    <location>
        <position position="92"/>
    </location>
    <ligand>
        <name>NADP(+)</name>
        <dbReference type="ChEBI" id="CHEBI:58349"/>
    </ligand>
</feature>
<feature type="binding site" evidence="1">
    <location>
        <position position="143"/>
    </location>
    <ligand>
        <name>NADP(+)</name>
        <dbReference type="ChEBI" id="CHEBI:58349"/>
    </ligand>
</feature>
<feature type="binding site" evidence="1">
    <location>
        <position position="168"/>
    </location>
    <ligand>
        <name>substrate</name>
    </ligand>
</feature>
<feature type="binding site" evidence="1">
    <location>
        <position position="169"/>
    </location>
    <ligand>
        <name>NADP(+)</name>
        <dbReference type="ChEBI" id="CHEBI:58349"/>
    </ligand>
</feature>
<feature type="binding site" evidence="1">
    <location>
        <position position="177"/>
    </location>
    <ligand>
        <name>NADP(+)</name>
        <dbReference type="ChEBI" id="CHEBI:58349"/>
    </ligand>
</feature>
<feature type="binding site" evidence="1">
    <location>
        <position position="179"/>
    </location>
    <ligand>
        <name>substrate</name>
    </ligand>
</feature>
<feature type="binding site" evidence="1">
    <location>
        <position position="186"/>
    </location>
    <ligand>
        <name>substrate</name>
    </ligand>
</feature>
<feature type="binding site" evidence="1">
    <location>
        <begin position="200"/>
        <end position="203"/>
    </location>
    <ligand>
        <name>substrate</name>
    </ligand>
</feature>
<feature type="binding site" evidence="1">
    <location>
        <position position="213"/>
    </location>
    <ligand>
        <name>substrate</name>
    </ligand>
</feature>
<feature type="binding site" evidence="1">
    <location>
        <position position="292"/>
    </location>
    <ligand>
        <name>substrate</name>
    </ligand>
</feature>
<sequence length="330" mass="37056">MTLIVTGAAGFIGANIVKALNERGESRIIAVDNLTRADKFRNLVDCEIDDYLDKTEFVERFARGDFGKVRAVFHEGACSDTMETDGRYMMDNNFRYSRAVLDACLAQGAQFLYASSAAIYGGSTRFVEEREVEAPLNVYGYSKFLFDQVIRRVLPSARSQIAGFRYFNVYGPRETHKGRMASVAFHNFNQFRAEGKVKLFGEYNGYAPGEQTRDFVSVEDVAKVNLFFFDHPEKSGIFNLGTGRAQPFNDIASTVVNTLRALDNLPPLTLAQQVEQGLIEYVAFPDALRGKYQCFTQADQTKLRAAGYDAPFLTVQEGVDRYVRWLSGQV</sequence>
<dbReference type="EC" id="5.1.3.20" evidence="1"/>
<dbReference type="EMBL" id="CP000614">
    <property type="protein sequence ID" value="ABO53985.1"/>
    <property type="molecule type" value="Genomic_DNA"/>
</dbReference>
<dbReference type="SMR" id="A4JCI2"/>
<dbReference type="KEGG" id="bvi:Bcep1808_0974"/>
<dbReference type="eggNOG" id="COG0451">
    <property type="taxonomic scope" value="Bacteria"/>
</dbReference>
<dbReference type="HOGENOM" id="CLU_007383_1_3_4"/>
<dbReference type="UniPathway" id="UPA00356">
    <property type="reaction ID" value="UER00440"/>
</dbReference>
<dbReference type="Proteomes" id="UP000002287">
    <property type="component" value="Chromosome 1"/>
</dbReference>
<dbReference type="GO" id="GO:0008712">
    <property type="term" value="F:ADP-glyceromanno-heptose 6-epimerase activity"/>
    <property type="evidence" value="ECO:0007669"/>
    <property type="project" value="UniProtKB-UniRule"/>
</dbReference>
<dbReference type="GO" id="GO:0050661">
    <property type="term" value="F:NADP binding"/>
    <property type="evidence" value="ECO:0007669"/>
    <property type="project" value="InterPro"/>
</dbReference>
<dbReference type="GO" id="GO:0097171">
    <property type="term" value="P:ADP-L-glycero-beta-D-manno-heptose biosynthetic process"/>
    <property type="evidence" value="ECO:0007669"/>
    <property type="project" value="UniProtKB-UniPathway"/>
</dbReference>
<dbReference type="GO" id="GO:0005975">
    <property type="term" value="P:carbohydrate metabolic process"/>
    <property type="evidence" value="ECO:0007669"/>
    <property type="project" value="UniProtKB-UniRule"/>
</dbReference>
<dbReference type="CDD" id="cd05248">
    <property type="entry name" value="ADP_GME_SDR_e"/>
    <property type="match status" value="1"/>
</dbReference>
<dbReference type="Gene3D" id="3.40.50.720">
    <property type="entry name" value="NAD(P)-binding Rossmann-like Domain"/>
    <property type="match status" value="1"/>
</dbReference>
<dbReference type="Gene3D" id="3.90.25.10">
    <property type="entry name" value="UDP-galactose 4-epimerase, domain 1"/>
    <property type="match status" value="1"/>
</dbReference>
<dbReference type="HAMAP" id="MF_01601">
    <property type="entry name" value="Heptose_epimerase"/>
    <property type="match status" value="1"/>
</dbReference>
<dbReference type="InterPro" id="IPR001509">
    <property type="entry name" value="Epimerase_deHydtase"/>
</dbReference>
<dbReference type="InterPro" id="IPR011912">
    <property type="entry name" value="Heptose_epim"/>
</dbReference>
<dbReference type="InterPro" id="IPR036291">
    <property type="entry name" value="NAD(P)-bd_dom_sf"/>
</dbReference>
<dbReference type="NCBIfam" id="TIGR02197">
    <property type="entry name" value="heptose_epim"/>
    <property type="match status" value="1"/>
</dbReference>
<dbReference type="PANTHER" id="PTHR43103:SF3">
    <property type="entry name" value="ADP-L-GLYCERO-D-MANNO-HEPTOSE-6-EPIMERASE"/>
    <property type="match status" value="1"/>
</dbReference>
<dbReference type="PANTHER" id="PTHR43103">
    <property type="entry name" value="NUCLEOSIDE-DIPHOSPHATE-SUGAR EPIMERASE"/>
    <property type="match status" value="1"/>
</dbReference>
<dbReference type="Pfam" id="PF01370">
    <property type="entry name" value="Epimerase"/>
    <property type="match status" value="1"/>
</dbReference>
<dbReference type="SUPFAM" id="SSF51735">
    <property type="entry name" value="NAD(P)-binding Rossmann-fold domains"/>
    <property type="match status" value="1"/>
</dbReference>
<protein>
    <recommendedName>
        <fullName evidence="1">ADP-L-glycero-D-manno-heptose-6-epimerase</fullName>
        <ecNumber evidence="1">5.1.3.20</ecNumber>
    </recommendedName>
    <alternativeName>
        <fullName evidence="1">ADP-L-glycero-beta-D-manno-heptose-6-epimerase</fullName>
        <shortName evidence="1">ADP-glyceromanno-heptose 6-epimerase</shortName>
        <shortName evidence="1">ADP-hep 6-epimerase</shortName>
        <shortName evidence="1">AGME</shortName>
    </alternativeName>
</protein>
<organism>
    <name type="scientific">Burkholderia vietnamiensis (strain G4 / LMG 22486)</name>
    <name type="common">Burkholderia cepacia (strain R1808)</name>
    <dbReference type="NCBI Taxonomy" id="269482"/>
    <lineage>
        <taxon>Bacteria</taxon>
        <taxon>Pseudomonadati</taxon>
        <taxon>Pseudomonadota</taxon>
        <taxon>Betaproteobacteria</taxon>
        <taxon>Burkholderiales</taxon>
        <taxon>Burkholderiaceae</taxon>
        <taxon>Burkholderia</taxon>
        <taxon>Burkholderia cepacia complex</taxon>
    </lineage>
</organism>
<evidence type="ECO:0000255" key="1">
    <source>
        <dbReference type="HAMAP-Rule" id="MF_01601"/>
    </source>
</evidence>
<gene>
    <name evidence="1" type="primary">hldD</name>
    <name type="ordered locus">Bcep1808_0974</name>
</gene>
<proteinExistence type="inferred from homology"/>
<keyword id="KW-0119">Carbohydrate metabolism</keyword>
<keyword id="KW-0413">Isomerase</keyword>
<keyword id="KW-0521">NADP</keyword>
<accession>A4JCI2</accession>
<name>HLDD_BURVG</name>
<comment type="function">
    <text evidence="1">Catalyzes the interconversion between ADP-D-glycero-beta-D-manno-heptose and ADP-L-glycero-beta-D-manno-heptose via an epimerization at carbon 6 of the heptose.</text>
</comment>
<comment type="catalytic activity">
    <reaction evidence="1">
        <text>ADP-D-glycero-beta-D-manno-heptose = ADP-L-glycero-beta-D-manno-heptose</text>
        <dbReference type="Rhea" id="RHEA:17577"/>
        <dbReference type="ChEBI" id="CHEBI:59967"/>
        <dbReference type="ChEBI" id="CHEBI:61506"/>
        <dbReference type="EC" id="5.1.3.20"/>
    </reaction>
</comment>
<comment type="cofactor">
    <cofactor evidence="1">
        <name>NADP(+)</name>
        <dbReference type="ChEBI" id="CHEBI:58349"/>
    </cofactor>
    <text evidence="1">Binds 1 NADP(+) per subunit.</text>
</comment>
<comment type="pathway">
    <text evidence="1">Nucleotide-sugar biosynthesis; ADP-L-glycero-beta-D-manno-heptose biosynthesis; ADP-L-glycero-beta-D-manno-heptose from D-glycero-beta-D-manno-heptose 7-phosphate: step 4/4.</text>
</comment>
<comment type="subunit">
    <text evidence="1">Homopentamer.</text>
</comment>
<comment type="domain">
    <text evidence="1">Contains a large N-terminal NADP-binding domain, and a smaller C-terminal substrate-binding domain.</text>
</comment>
<comment type="similarity">
    <text evidence="1">Belongs to the NAD(P)-dependent epimerase/dehydratase family. HldD subfamily.</text>
</comment>